<name>HIS6_NEIM0</name>
<sequence length="255" mass="27028">MALAKRIIPCLDVKDGRVVKGVNFIGLRDAGDPVEAAKRYNGEGADELTFLDITASSDNRDTILHIIEEVAGQVFIPLTVGGGVRTVADIRRLLNAGADKVSINTAAVTRPDLINEAAGFFGSQAIVAAVDAKAVNPENTRWEIFTHGGRNPTGLDAVEWAVEMQKRGAGEILLTGMDRDGTKQGFNLPLTRAVAEAVDIPVIASGGVGNVRHLIEGITEGKADAVLAAGIFHFGEIAIREAKRAMREAGIEVRL</sequence>
<accession>A9M2Q5</accession>
<dbReference type="EC" id="4.3.2.10" evidence="1"/>
<dbReference type="EMBL" id="CP000381">
    <property type="protein sequence ID" value="ABX72774.1"/>
    <property type="molecule type" value="Genomic_DNA"/>
</dbReference>
<dbReference type="RefSeq" id="WP_012221390.1">
    <property type="nucleotide sequence ID" value="NC_010120.1"/>
</dbReference>
<dbReference type="SMR" id="A9M2Q5"/>
<dbReference type="KEGG" id="nmn:NMCC_0576"/>
<dbReference type="HOGENOM" id="CLU_048577_4_0_4"/>
<dbReference type="UniPathway" id="UPA00031">
    <property type="reaction ID" value="UER00010"/>
</dbReference>
<dbReference type="Proteomes" id="UP000001177">
    <property type="component" value="Chromosome"/>
</dbReference>
<dbReference type="GO" id="GO:0005737">
    <property type="term" value="C:cytoplasm"/>
    <property type="evidence" value="ECO:0007669"/>
    <property type="project" value="UniProtKB-SubCell"/>
</dbReference>
<dbReference type="GO" id="GO:0000107">
    <property type="term" value="F:imidazoleglycerol-phosphate synthase activity"/>
    <property type="evidence" value="ECO:0007669"/>
    <property type="project" value="UniProtKB-UniRule"/>
</dbReference>
<dbReference type="GO" id="GO:0016829">
    <property type="term" value="F:lyase activity"/>
    <property type="evidence" value="ECO:0007669"/>
    <property type="project" value="UniProtKB-KW"/>
</dbReference>
<dbReference type="GO" id="GO:0000105">
    <property type="term" value="P:L-histidine biosynthetic process"/>
    <property type="evidence" value="ECO:0007669"/>
    <property type="project" value="UniProtKB-UniRule"/>
</dbReference>
<dbReference type="CDD" id="cd04731">
    <property type="entry name" value="HisF"/>
    <property type="match status" value="1"/>
</dbReference>
<dbReference type="FunFam" id="3.20.20.70:FF:000006">
    <property type="entry name" value="Imidazole glycerol phosphate synthase subunit HisF"/>
    <property type="match status" value="1"/>
</dbReference>
<dbReference type="Gene3D" id="3.20.20.70">
    <property type="entry name" value="Aldolase class I"/>
    <property type="match status" value="1"/>
</dbReference>
<dbReference type="HAMAP" id="MF_01013">
    <property type="entry name" value="HisF"/>
    <property type="match status" value="1"/>
</dbReference>
<dbReference type="InterPro" id="IPR013785">
    <property type="entry name" value="Aldolase_TIM"/>
</dbReference>
<dbReference type="InterPro" id="IPR006062">
    <property type="entry name" value="His_biosynth"/>
</dbReference>
<dbReference type="InterPro" id="IPR004651">
    <property type="entry name" value="HisF"/>
</dbReference>
<dbReference type="InterPro" id="IPR050064">
    <property type="entry name" value="IGPS_HisA/HisF"/>
</dbReference>
<dbReference type="InterPro" id="IPR011060">
    <property type="entry name" value="RibuloseP-bd_barrel"/>
</dbReference>
<dbReference type="NCBIfam" id="TIGR00735">
    <property type="entry name" value="hisF"/>
    <property type="match status" value="1"/>
</dbReference>
<dbReference type="PANTHER" id="PTHR21235:SF2">
    <property type="entry name" value="IMIDAZOLE GLYCEROL PHOSPHATE SYNTHASE HISHF"/>
    <property type="match status" value="1"/>
</dbReference>
<dbReference type="PANTHER" id="PTHR21235">
    <property type="entry name" value="IMIDAZOLE GLYCEROL PHOSPHATE SYNTHASE SUBUNIT HISF/H IGP SYNTHASE SUBUNIT HISF/H"/>
    <property type="match status" value="1"/>
</dbReference>
<dbReference type="Pfam" id="PF00977">
    <property type="entry name" value="His_biosynth"/>
    <property type="match status" value="1"/>
</dbReference>
<dbReference type="SUPFAM" id="SSF51366">
    <property type="entry name" value="Ribulose-phoshate binding barrel"/>
    <property type="match status" value="1"/>
</dbReference>
<organism>
    <name type="scientific">Neisseria meningitidis serogroup C (strain 053442)</name>
    <dbReference type="NCBI Taxonomy" id="374833"/>
    <lineage>
        <taxon>Bacteria</taxon>
        <taxon>Pseudomonadati</taxon>
        <taxon>Pseudomonadota</taxon>
        <taxon>Betaproteobacteria</taxon>
        <taxon>Neisseriales</taxon>
        <taxon>Neisseriaceae</taxon>
        <taxon>Neisseria</taxon>
    </lineage>
</organism>
<keyword id="KW-0028">Amino-acid biosynthesis</keyword>
<keyword id="KW-0963">Cytoplasm</keyword>
<keyword id="KW-0368">Histidine biosynthesis</keyword>
<keyword id="KW-0456">Lyase</keyword>
<gene>
    <name evidence="1" type="primary">hisF</name>
    <name type="ordered locus">NMCC_0576</name>
</gene>
<proteinExistence type="inferred from homology"/>
<comment type="function">
    <text evidence="1">IGPS catalyzes the conversion of PRFAR and glutamine to IGP, AICAR and glutamate. The HisF subunit catalyzes the cyclization activity that produces IGP and AICAR from PRFAR using the ammonia provided by the HisH subunit.</text>
</comment>
<comment type="catalytic activity">
    <reaction evidence="1">
        <text>5-[(5-phospho-1-deoxy-D-ribulos-1-ylimino)methylamino]-1-(5-phospho-beta-D-ribosyl)imidazole-4-carboxamide + L-glutamine = D-erythro-1-(imidazol-4-yl)glycerol 3-phosphate + 5-amino-1-(5-phospho-beta-D-ribosyl)imidazole-4-carboxamide + L-glutamate + H(+)</text>
        <dbReference type="Rhea" id="RHEA:24793"/>
        <dbReference type="ChEBI" id="CHEBI:15378"/>
        <dbReference type="ChEBI" id="CHEBI:29985"/>
        <dbReference type="ChEBI" id="CHEBI:58278"/>
        <dbReference type="ChEBI" id="CHEBI:58359"/>
        <dbReference type="ChEBI" id="CHEBI:58475"/>
        <dbReference type="ChEBI" id="CHEBI:58525"/>
        <dbReference type="EC" id="4.3.2.10"/>
    </reaction>
</comment>
<comment type="pathway">
    <text evidence="1">Amino-acid biosynthesis; L-histidine biosynthesis; L-histidine from 5-phospho-alpha-D-ribose 1-diphosphate: step 5/9.</text>
</comment>
<comment type="subunit">
    <text evidence="1">Heterodimer of HisH and HisF.</text>
</comment>
<comment type="subcellular location">
    <subcellularLocation>
        <location evidence="1">Cytoplasm</location>
    </subcellularLocation>
</comment>
<comment type="similarity">
    <text evidence="1">Belongs to the HisA/HisF family.</text>
</comment>
<evidence type="ECO:0000255" key="1">
    <source>
        <dbReference type="HAMAP-Rule" id="MF_01013"/>
    </source>
</evidence>
<protein>
    <recommendedName>
        <fullName evidence="1">Imidazole glycerol phosphate synthase subunit HisF</fullName>
        <ecNumber evidence="1">4.3.2.10</ecNumber>
    </recommendedName>
    <alternativeName>
        <fullName evidence="1">IGP synthase cyclase subunit</fullName>
    </alternativeName>
    <alternativeName>
        <fullName evidence="1">IGP synthase subunit HisF</fullName>
    </alternativeName>
    <alternativeName>
        <fullName evidence="1">ImGP synthase subunit HisF</fullName>
        <shortName evidence="1">IGPS subunit HisF</shortName>
    </alternativeName>
</protein>
<reference key="1">
    <citation type="journal article" date="2008" name="Genomics">
        <title>Characterization of ST-4821 complex, a unique Neisseria meningitidis clone.</title>
        <authorList>
            <person name="Peng J."/>
            <person name="Yang L."/>
            <person name="Yang F."/>
            <person name="Yang J."/>
            <person name="Yan Y."/>
            <person name="Nie H."/>
            <person name="Zhang X."/>
            <person name="Xiong Z."/>
            <person name="Jiang Y."/>
            <person name="Cheng F."/>
            <person name="Xu X."/>
            <person name="Chen S."/>
            <person name="Sun L."/>
            <person name="Li W."/>
            <person name="Shen Y."/>
            <person name="Shao Z."/>
            <person name="Liang X."/>
            <person name="Xu J."/>
            <person name="Jin Q."/>
        </authorList>
    </citation>
    <scope>NUCLEOTIDE SEQUENCE [LARGE SCALE GENOMIC DNA]</scope>
    <source>
        <strain>053442</strain>
    </source>
</reference>
<feature type="chain" id="PRO_1000084067" description="Imidazole glycerol phosphate synthase subunit HisF">
    <location>
        <begin position="1"/>
        <end position="255"/>
    </location>
</feature>
<feature type="active site" evidence="1">
    <location>
        <position position="12"/>
    </location>
</feature>
<feature type="active site" evidence="1">
    <location>
        <position position="131"/>
    </location>
</feature>